<reference key="1">
    <citation type="journal article" date="2003" name="Bioinformatics">
        <title>Annotation pattern of ESTs from Spodoptera frugiperda Sf9 cells and analysis of the ribosomal protein genes reveal insect-specific features and unexpectedly low codon usage bias.</title>
        <authorList>
            <person name="Landais I."/>
            <person name="Ogliastro M."/>
            <person name="Mita K."/>
            <person name="Nohata J."/>
            <person name="Lopez-Ferber M."/>
            <person name="Duonor-Cerutti M."/>
            <person name="Shimada T."/>
            <person name="Fournier P."/>
            <person name="Devauchelle G."/>
        </authorList>
    </citation>
    <scope>NUCLEOTIDE SEQUENCE [LARGE SCALE MRNA]</scope>
</reference>
<keyword id="KW-0687">Ribonucleoprotein</keyword>
<keyword id="KW-0689">Ribosomal protein</keyword>
<organism>
    <name type="scientific">Spodoptera frugiperda</name>
    <name type="common">Fall armyworm</name>
    <dbReference type="NCBI Taxonomy" id="7108"/>
    <lineage>
        <taxon>Eukaryota</taxon>
        <taxon>Metazoa</taxon>
        <taxon>Ecdysozoa</taxon>
        <taxon>Arthropoda</taxon>
        <taxon>Hexapoda</taxon>
        <taxon>Insecta</taxon>
        <taxon>Pterygota</taxon>
        <taxon>Neoptera</taxon>
        <taxon>Endopterygota</taxon>
        <taxon>Lepidoptera</taxon>
        <taxon>Glossata</taxon>
        <taxon>Ditrysia</taxon>
        <taxon>Noctuoidea</taxon>
        <taxon>Noctuidae</taxon>
        <taxon>Amphipyrinae</taxon>
        <taxon>Spodoptera</taxon>
    </lineage>
</organism>
<proteinExistence type="evidence at transcript level"/>
<feature type="chain" id="PRO_0000213933" description="Large ribosomal subunit protein eL20">
    <location>
        <begin position="1"/>
        <end position="177"/>
    </location>
</feature>
<sequence>MKAKGELKEYEVIGRKLPSESEPKPPLYKMRIFSPDQIVAKSRFWYFLRQLKKFKKTTGEIVSIREIPEKSPVKIKNFGIWLRYESRSGVHNMYREYRDLSVGGAVTQCYRDMGARHRARAHSIQIIKVEVIKASACRRPQVKQFHNSTIRFPLPKRVHHHKRLNTFAYKRPSTYFL</sequence>
<protein>
    <recommendedName>
        <fullName evidence="1">Large ribosomal subunit protein eL20</fullName>
    </recommendedName>
    <alternativeName>
        <fullName>60S ribosomal protein L18a</fullName>
    </alternativeName>
</protein>
<comment type="similarity">
    <text evidence="1">Belongs to the eukaryotic ribosomal protein eL20 family.</text>
</comment>
<dbReference type="EMBL" id="AY072289">
    <property type="protein sequence ID" value="AAL62470.1"/>
    <property type="molecule type" value="mRNA"/>
</dbReference>
<dbReference type="SMR" id="Q8WQI7"/>
<dbReference type="EnsemblMetazoa" id="XM_035594191.2">
    <property type="protein sequence ID" value="XP_035450084.1"/>
    <property type="gene ID" value="LOC118276058"/>
</dbReference>
<dbReference type="OrthoDB" id="1294322at2759"/>
<dbReference type="Proteomes" id="UP000829999">
    <property type="component" value="Unplaced"/>
</dbReference>
<dbReference type="GO" id="GO:1990904">
    <property type="term" value="C:ribonucleoprotein complex"/>
    <property type="evidence" value="ECO:0007669"/>
    <property type="project" value="UniProtKB-KW"/>
</dbReference>
<dbReference type="GO" id="GO:0005840">
    <property type="term" value="C:ribosome"/>
    <property type="evidence" value="ECO:0007669"/>
    <property type="project" value="UniProtKB-KW"/>
</dbReference>
<dbReference type="GO" id="GO:0003735">
    <property type="term" value="F:structural constituent of ribosome"/>
    <property type="evidence" value="ECO:0007669"/>
    <property type="project" value="InterPro"/>
</dbReference>
<dbReference type="GO" id="GO:0006412">
    <property type="term" value="P:translation"/>
    <property type="evidence" value="ECO:0007669"/>
    <property type="project" value="InterPro"/>
</dbReference>
<dbReference type="FunFam" id="3.10.20.10:FF:000001">
    <property type="entry name" value="60S ribosomal protein L18a"/>
    <property type="match status" value="1"/>
</dbReference>
<dbReference type="FunFam" id="3.10.20.10:FF:000002">
    <property type="entry name" value="60S ribosomal protein L18a"/>
    <property type="match status" value="1"/>
</dbReference>
<dbReference type="Gene3D" id="3.10.20.10">
    <property type="match status" value="2"/>
</dbReference>
<dbReference type="HAMAP" id="MF_00273">
    <property type="entry name" value="Ribosomal_eL20"/>
    <property type="match status" value="1"/>
</dbReference>
<dbReference type="InterPro" id="IPR028877">
    <property type="entry name" value="Ribosomal_eL20"/>
</dbReference>
<dbReference type="InterPro" id="IPR023573">
    <property type="entry name" value="Ribosomal_eL20_dom"/>
</dbReference>
<dbReference type="InterPro" id="IPR021138">
    <property type="entry name" value="Ribosomal_eL20_eukaryotes"/>
</dbReference>
<dbReference type="PANTHER" id="PTHR10052">
    <property type="entry name" value="60S RIBOSOMAL PROTEIN L18A"/>
    <property type="match status" value="1"/>
</dbReference>
<dbReference type="Pfam" id="PF01775">
    <property type="entry name" value="Ribosomal_L18A"/>
    <property type="match status" value="1"/>
</dbReference>
<dbReference type="PIRSF" id="PIRSF002190">
    <property type="entry name" value="Ribosomal_L18a"/>
    <property type="match status" value="1"/>
</dbReference>
<dbReference type="SUPFAM" id="SSF160374">
    <property type="entry name" value="RplX-like"/>
    <property type="match status" value="1"/>
</dbReference>
<evidence type="ECO:0000305" key="1"/>
<gene>
    <name type="primary">RpL18A</name>
</gene>
<accession>Q8WQI7</accession>
<name>RL18A_SPOFR</name>